<feature type="chain" id="PRO_0000315618" description="Protein unc-79 homolog">
    <location>
        <begin position="1"/>
        <end position="2635"/>
    </location>
</feature>
<feature type="transmembrane region" description="Helical" evidence="3">
    <location>
        <begin position="2223"/>
        <end position="2243"/>
    </location>
</feature>
<feature type="transmembrane region" description="Helical" evidence="3">
    <location>
        <begin position="2466"/>
        <end position="2486"/>
    </location>
</feature>
<feature type="region of interest" description="Disordered" evidence="4">
    <location>
        <begin position="907"/>
        <end position="929"/>
    </location>
</feature>
<feature type="region of interest" description="Disordered" evidence="4">
    <location>
        <begin position="1538"/>
        <end position="1575"/>
    </location>
</feature>
<feature type="region of interest" description="Disordered" evidence="4">
    <location>
        <begin position="1607"/>
        <end position="1678"/>
    </location>
</feature>
<feature type="region of interest" description="Disordered" evidence="4">
    <location>
        <begin position="1693"/>
        <end position="1832"/>
    </location>
</feature>
<feature type="region of interest" description="Disordered" evidence="4">
    <location>
        <begin position="1863"/>
        <end position="1909"/>
    </location>
</feature>
<feature type="region of interest" description="Disordered" evidence="4">
    <location>
        <begin position="1929"/>
        <end position="1950"/>
    </location>
</feature>
<feature type="compositionally biased region" description="Low complexity" evidence="4">
    <location>
        <begin position="1666"/>
        <end position="1678"/>
    </location>
</feature>
<feature type="compositionally biased region" description="Polar residues" evidence="4">
    <location>
        <begin position="1699"/>
        <end position="1713"/>
    </location>
</feature>
<feature type="compositionally biased region" description="Basic and acidic residues" evidence="4">
    <location>
        <begin position="1761"/>
        <end position="1775"/>
    </location>
</feature>
<feature type="compositionally biased region" description="Polar residues" evidence="4">
    <location>
        <begin position="1897"/>
        <end position="1909"/>
    </location>
</feature>
<feature type="compositionally biased region" description="Polar residues" evidence="4">
    <location>
        <begin position="1929"/>
        <end position="1947"/>
    </location>
</feature>
<feature type="modified residue" description="Phosphoserine" evidence="1">
    <location>
        <position position="754"/>
    </location>
</feature>
<feature type="modified residue" description="Phosphoserine" evidence="1">
    <location>
        <position position="758"/>
    </location>
</feature>
<feature type="splice variant" id="VSP_030583" description="In isoform 2." evidence="8">
    <location>
        <begin position="1"/>
        <end position="177"/>
    </location>
</feature>
<feature type="splice variant" id="VSP_030584" description="In isoform 3." evidence="7">
    <original>R</original>
    <variation>PMRLTRHEQSAPALGGTPEQTPG</variation>
    <location>
        <position position="1252"/>
    </location>
</feature>
<feature type="sequence variant" id="VAR_038260" description="In dbSNP:rs28670114.">
    <original>V</original>
    <variation>A</variation>
    <location>
        <position position="1597"/>
    </location>
</feature>
<feature type="sequence variant" id="VAR_038261" description="In dbSNP:rs4905081." evidence="5">
    <original>V</original>
    <variation>I</variation>
    <location>
        <position position="1670"/>
    </location>
</feature>
<feature type="sequence variant" id="VAR_038262" description="In dbSNP:rs2296687.">
    <original>K</original>
    <variation>R</variation>
    <location>
        <position position="2183"/>
    </location>
</feature>
<feature type="sequence variant" id="VAR_038263" description="In dbSNP:rs7359096.">
    <original>G</original>
    <variation>S</variation>
    <location>
        <position position="2444"/>
    </location>
</feature>
<feature type="sequence conflict" description="In Ref. 2; BAC86131." evidence="9" ref="2">
    <original>K</original>
    <variation>R</variation>
    <location>
        <position position="494"/>
    </location>
</feature>
<feature type="sequence conflict" description="In Ref. 2; BAC86131." evidence="9" ref="2">
    <original>L</original>
    <variation>P</variation>
    <location>
        <position position="1284"/>
    </location>
</feature>
<feature type="helix" evidence="10">
    <location>
        <begin position="176"/>
        <end position="179"/>
    </location>
</feature>
<feature type="helix" evidence="10">
    <location>
        <begin position="180"/>
        <end position="183"/>
    </location>
</feature>
<feature type="helix" evidence="10">
    <location>
        <begin position="187"/>
        <end position="199"/>
    </location>
</feature>
<feature type="helix" evidence="10">
    <location>
        <begin position="201"/>
        <end position="205"/>
    </location>
</feature>
<feature type="helix" evidence="10">
    <location>
        <begin position="222"/>
        <end position="233"/>
    </location>
</feature>
<feature type="helix" evidence="10">
    <location>
        <begin position="237"/>
        <end position="250"/>
    </location>
</feature>
<feature type="helix" evidence="10">
    <location>
        <begin position="254"/>
        <end position="264"/>
    </location>
</feature>
<feature type="helix" evidence="10">
    <location>
        <begin position="267"/>
        <end position="269"/>
    </location>
</feature>
<feature type="helix" evidence="10">
    <location>
        <begin position="270"/>
        <end position="280"/>
    </location>
</feature>
<feature type="helix" evidence="10">
    <location>
        <begin position="282"/>
        <end position="284"/>
    </location>
</feature>
<feature type="helix" evidence="10">
    <location>
        <begin position="435"/>
        <end position="437"/>
    </location>
</feature>
<feature type="helix" evidence="10">
    <location>
        <begin position="440"/>
        <end position="455"/>
    </location>
</feature>
<feature type="helix" evidence="10">
    <location>
        <begin position="498"/>
        <end position="510"/>
    </location>
</feature>
<feature type="helix" evidence="10">
    <location>
        <begin position="520"/>
        <end position="537"/>
    </location>
</feature>
<feature type="helix" evidence="10">
    <location>
        <begin position="554"/>
        <end position="567"/>
    </location>
</feature>
<feature type="helix" evidence="10">
    <location>
        <begin position="569"/>
        <end position="576"/>
    </location>
</feature>
<feature type="helix" evidence="10">
    <location>
        <begin position="596"/>
        <end position="610"/>
    </location>
</feature>
<feature type="helix" evidence="10">
    <location>
        <begin position="611"/>
        <end position="613"/>
    </location>
</feature>
<feature type="helix" evidence="10">
    <location>
        <begin position="619"/>
        <end position="634"/>
    </location>
</feature>
<feature type="turn" evidence="11">
    <location>
        <begin position="638"/>
        <end position="641"/>
    </location>
</feature>
<feature type="helix" evidence="10">
    <location>
        <begin position="644"/>
        <end position="651"/>
    </location>
</feature>
<feature type="strand" evidence="10">
    <location>
        <begin position="652"/>
        <end position="655"/>
    </location>
</feature>
<feature type="helix" evidence="10">
    <location>
        <begin position="663"/>
        <end position="666"/>
    </location>
</feature>
<feature type="helix" evidence="10">
    <location>
        <begin position="668"/>
        <end position="671"/>
    </location>
</feature>
<feature type="helix" evidence="10">
    <location>
        <begin position="672"/>
        <end position="674"/>
    </location>
</feature>
<feature type="strand" evidence="10">
    <location>
        <begin position="675"/>
        <end position="677"/>
    </location>
</feature>
<feature type="helix" evidence="10">
    <location>
        <begin position="679"/>
        <end position="694"/>
    </location>
</feature>
<feature type="helix" evidence="10">
    <location>
        <begin position="701"/>
        <end position="715"/>
    </location>
</feature>
<feature type="helix" evidence="10">
    <location>
        <begin position="797"/>
        <end position="815"/>
    </location>
</feature>
<feature type="helix" evidence="10">
    <location>
        <begin position="826"/>
        <end position="840"/>
    </location>
</feature>
<feature type="helix" evidence="10">
    <location>
        <begin position="860"/>
        <end position="878"/>
    </location>
</feature>
<feature type="helix" evidence="10">
    <location>
        <begin position="951"/>
        <end position="963"/>
    </location>
</feature>
<feature type="helix" evidence="10">
    <location>
        <begin position="969"/>
        <end position="983"/>
    </location>
</feature>
<feature type="turn" evidence="10">
    <location>
        <begin position="984"/>
        <end position="986"/>
    </location>
</feature>
<feature type="helix" evidence="10">
    <location>
        <begin position="988"/>
        <end position="995"/>
    </location>
</feature>
<feature type="helix" evidence="10">
    <location>
        <begin position="997"/>
        <end position="1006"/>
    </location>
</feature>
<feature type="helix" evidence="10">
    <location>
        <begin position="1008"/>
        <end position="1014"/>
    </location>
</feature>
<feature type="helix" evidence="10">
    <location>
        <begin position="1021"/>
        <end position="1035"/>
    </location>
</feature>
<feature type="helix" evidence="10">
    <location>
        <begin position="1040"/>
        <end position="1052"/>
    </location>
</feature>
<feature type="helix" evidence="10">
    <location>
        <begin position="1057"/>
        <end position="1072"/>
    </location>
</feature>
<feature type="helix" evidence="10">
    <location>
        <begin position="1076"/>
        <end position="1079"/>
    </location>
</feature>
<feature type="helix" evidence="10">
    <location>
        <begin position="1083"/>
        <end position="1099"/>
    </location>
</feature>
<feature type="helix" evidence="10">
    <location>
        <begin position="1105"/>
        <end position="1115"/>
    </location>
</feature>
<feature type="helix" evidence="10">
    <location>
        <begin position="1120"/>
        <end position="1136"/>
    </location>
</feature>
<feature type="helix" evidence="10">
    <location>
        <begin position="1138"/>
        <end position="1140"/>
    </location>
</feature>
<feature type="helix" evidence="10">
    <location>
        <begin position="1141"/>
        <end position="1154"/>
    </location>
</feature>
<feature type="helix" evidence="10">
    <location>
        <begin position="1163"/>
        <end position="1180"/>
    </location>
</feature>
<feature type="helix" evidence="10">
    <location>
        <begin position="1209"/>
        <end position="1219"/>
    </location>
</feature>
<feature type="turn" evidence="10">
    <location>
        <begin position="1221"/>
        <end position="1223"/>
    </location>
</feature>
<feature type="helix" evidence="10">
    <location>
        <begin position="1228"/>
        <end position="1231"/>
    </location>
</feature>
<feature type="helix" evidence="10">
    <location>
        <begin position="1273"/>
        <end position="1289"/>
    </location>
</feature>
<feature type="helix" evidence="10">
    <location>
        <begin position="1299"/>
        <end position="1315"/>
    </location>
</feature>
<feature type="turn" evidence="10">
    <location>
        <begin position="1320"/>
        <end position="1322"/>
    </location>
</feature>
<feature type="strand" evidence="10">
    <location>
        <begin position="1325"/>
        <end position="1327"/>
    </location>
</feature>
<feature type="helix" evidence="10">
    <location>
        <begin position="1329"/>
        <end position="1334"/>
    </location>
</feature>
<feature type="helix" evidence="10">
    <location>
        <begin position="1336"/>
        <end position="1351"/>
    </location>
</feature>
<feature type="helix" evidence="10">
    <location>
        <begin position="1353"/>
        <end position="1371"/>
    </location>
</feature>
<feature type="helix" evidence="10">
    <location>
        <begin position="1376"/>
        <end position="1379"/>
    </location>
</feature>
<feature type="strand" evidence="10">
    <location>
        <begin position="1380"/>
        <end position="1382"/>
    </location>
</feature>
<feature type="helix" evidence="10">
    <location>
        <begin position="1387"/>
        <end position="1389"/>
    </location>
</feature>
<feature type="helix" evidence="10">
    <location>
        <begin position="1392"/>
        <end position="1408"/>
    </location>
</feature>
<feature type="helix" evidence="10">
    <location>
        <begin position="1414"/>
        <end position="1432"/>
    </location>
</feature>
<feature type="helix" evidence="10">
    <location>
        <begin position="2020"/>
        <end position="2036"/>
    </location>
</feature>
<feature type="helix" evidence="10">
    <location>
        <begin position="2038"/>
        <end position="2041"/>
    </location>
</feature>
<feature type="helix" evidence="10">
    <location>
        <begin position="2042"/>
        <end position="2044"/>
    </location>
</feature>
<feature type="helix" evidence="10">
    <location>
        <begin position="2045"/>
        <end position="2057"/>
    </location>
</feature>
<feature type="helix" evidence="10">
    <location>
        <begin position="2074"/>
        <end position="2089"/>
    </location>
</feature>
<feature type="helix" evidence="10">
    <location>
        <begin position="2090"/>
        <end position="2092"/>
    </location>
</feature>
<feature type="helix" evidence="10">
    <location>
        <begin position="2094"/>
        <end position="2099"/>
    </location>
</feature>
<feature type="helix" evidence="10">
    <location>
        <begin position="2108"/>
        <end position="2115"/>
    </location>
</feature>
<feature type="strand" evidence="10">
    <location>
        <begin position="2120"/>
        <end position="2122"/>
    </location>
</feature>
<feature type="helix" evidence="10">
    <location>
        <begin position="2124"/>
        <end position="2137"/>
    </location>
</feature>
<feature type="strand" evidence="10">
    <location>
        <begin position="2138"/>
        <end position="2140"/>
    </location>
</feature>
<feature type="helix" evidence="10">
    <location>
        <begin position="2145"/>
        <end position="2158"/>
    </location>
</feature>
<feature type="helix" evidence="10">
    <location>
        <begin position="2170"/>
        <end position="2181"/>
    </location>
</feature>
<feature type="helix" evidence="10">
    <location>
        <begin position="2182"/>
        <end position="2186"/>
    </location>
</feature>
<feature type="helix" evidence="10">
    <location>
        <begin position="2195"/>
        <end position="2205"/>
    </location>
</feature>
<feature type="helix" evidence="10">
    <location>
        <begin position="2210"/>
        <end position="2214"/>
    </location>
</feature>
<feature type="helix" evidence="10">
    <location>
        <begin position="2217"/>
        <end position="2230"/>
    </location>
</feature>
<feature type="helix" evidence="10">
    <location>
        <begin position="2235"/>
        <end position="2248"/>
    </location>
</feature>
<feature type="helix" evidence="10">
    <location>
        <begin position="2252"/>
        <end position="2270"/>
    </location>
</feature>
<feature type="helix" evidence="10">
    <location>
        <begin position="2278"/>
        <end position="2292"/>
    </location>
</feature>
<feature type="helix" evidence="10">
    <location>
        <begin position="2319"/>
        <end position="2324"/>
    </location>
</feature>
<feature type="helix" evidence="10">
    <location>
        <begin position="2325"/>
        <end position="2333"/>
    </location>
</feature>
<feature type="helix" evidence="10">
    <location>
        <begin position="2337"/>
        <end position="2342"/>
    </location>
</feature>
<feature type="helix" evidence="10">
    <location>
        <begin position="2357"/>
        <end position="2377"/>
    </location>
</feature>
<feature type="helix" evidence="10">
    <location>
        <begin position="2383"/>
        <end position="2387"/>
    </location>
</feature>
<feature type="helix" evidence="10">
    <location>
        <begin position="2389"/>
        <end position="2392"/>
    </location>
</feature>
<feature type="helix" evidence="10">
    <location>
        <begin position="2407"/>
        <end position="2428"/>
    </location>
</feature>
<feature type="helix" evidence="10">
    <location>
        <begin position="2441"/>
        <end position="2443"/>
    </location>
</feature>
<feature type="helix" evidence="10">
    <location>
        <begin position="2444"/>
        <end position="2457"/>
    </location>
</feature>
<feature type="helix" evidence="10">
    <location>
        <begin position="2471"/>
        <end position="2488"/>
    </location>
</feature>
<feature type="helix" evidence="10">
    <location>
        <begin position="2504"/>
        <end position="2526"/>
    </location>
</feature>
<feature type="helix" evidence="10">
    <location>
        <begin position="2531"/>
        <end position="2547"/>
    </location>
</feature>
<feature type="helix" evidence="10">
    <location>
        <begin position="2551"/>
        <end position="2565"/>
    </location>
</feature>
<feature type="helix" evidence="10">
    <location>
        <begin position="2576"/>
        <end position="2584"/>
    </location>
</feature>
<feature type="helix" evidence="10">
    <location>
        <begin position="2605"/>
        <end position="2624"/>
    </location>
</feature>
<evidence type="ECO:0000250" key="1">
    <source>
        <dbReference type="UniProtKB" id="Q0KK59"/>
    </source>
</evidence>
<evidence type="ECO:0000250" key="2">
    <source>
        <dbReference type="UniProtKB" id="Q8BLN6"/>
    </source>
</evidence>
<evidence type="ECO:0000255" key="3"/>
<evidence type="ECO:0000256" key="4">
    <source>
        <dbReference type="SAM" id="MobiDB-lite"/>
    </source>
</evidence>
<evidence type="ECO:0000269" key="5">
    <source>
    </source>
</evidence>
<evidence type="ECO:0000269" key="6">
    <source>
    </source>
</evidence>
<evidence type="ECO:0000303" key="7">
    <source>
    </source>
</evidence>
<evidence type="ECO:0000303" key="8">
    <source>
    </source>
</evidence>
<evidence type="ECO:0000305" key="9"/>
<evidence type="ECO:0007829" key="10">
    <source>
        <dbReference type="PDB" id="7SX3"/>
    </source>
</evidence>
<evidence type="ECO:0007829" key="11">
    <source>
        <dbReference type="PDB" id="7SX4"/>
    </source>
</evidence>
<name>UNC79_HUMAN</name>
<gene>
    <name type="primary">UNC79</name>
    <name type="synonym">KIAA1409</name>
</gene>
<organism>
    <name type="scientific">Homo sapiens</name>
    <name type="common">Human</name>
    <dbReference type="NCBI Taxonomy" id="9606"/>
    <lineage>
        <taxon>Eukaryota</taxon>
        <taxon>Metazoa</taxon>
        <taxon>Chordata</taxon>
        <taxon>Craniata</taxon>
        <taxon>Vertebrata</taxon>
        <taxon>Euteleostomi</taxon>
        <taxon>Mammalia</taxon>
        <taxon>Eutheria</taxon>
        <taxon>Euarchontoglires</taxon>
        <taxon>Primates</taxon>
        <taxon>Haplorrhini</taxon>
        <taxon>Catarrhini</taxon>
        <taxon>Hominidae</taxon>
        <taxon>Homo</taxon>
    </lineage>
</organism>
<comment type="function">
    <text evidence="2">Auxiliary subunit of the NALCN sodium channel complex, a voltage-gated ion channel responsible for the resting Na(+) permeability that controls neuronal excitability. Activated by neuropeptides substance P, neurotensin, and extracellular calcium that regulates neuronal excitability by controlling the sizes of NALCN-dependent sodium-leak current.</text>
</comment>
<comment type="subunit">
    <text evidence="2">NALCN complex consists of NALCN and auxiliary subunits, UNC79, UNC80 and NACL1. These auxiliary subunits are essential for the NALCN channel function (By similarity). UNC80 bridges NALCN to UNC79 (By similarity).</text>
</comment>
<comment type="subcellular location">
    <subcellularLocation>
        <location evidence="6">Cell membrane</location>
        <topology evidence="3">Multi-pass membrane protein</topology>
    </subcellularLocation>
</comment>
<comment type="alternative products">
    <event type="alternative splicing"/>
    <isoform>
        <id>Q9P2D8-1</id>
        <name>1</name>
        <sequence type="displayed"/>
    </isoform>
    <isoform>
        <id>Q9P2D8-2</id>
        <name>2</name>
        <sequence type="described" ref="VSP_030583"/>
    </isoform>
    <isoform>
        <id>Q9P2D8-3</id>
        <name>3</name>
        <sequence type="described" ref="VSP_030584"/>
    </isoform>
</comment>
<comment type="similarity">
    <text evidence="9">Belongs to the unc-79 family.</text>
</comment>
<protein>
    <recommendedName>
        <fullName>Protein unc-79 homolog</fullName>
    </recommendedName>
</protein>
<proteinExistence type="evidence at protein level"/>
<accession>Q9P2D8</accession>
<accession>B5MDL6</accession>
<accession>Q6ZUT7</accession>
<sequence length="2635" mass="295326">MSTKAEQFASKIRYLQEYHNRVLHNIYPVPSGTDIANTLKYFSQTLLSILSRTGKKENQDASNLTVPMTMCLFPVPFPLTPSLRPQVSSINPTVTRSLLYSVLRDAPSERGPQSRDAQLSDYPSLDYQGLYVTLVTLLDLVPLLQHGQHDLGQSIFYTTTCLLPFLNDDILSTLPYTMISTLATFPPFLHKDIIEYLSTSFLPMAILGSSRREGVPAHVNLSASSMLMIAMQYTSNPVYHCQLLECLMKYKQEVWKDLLYVIAYGPSQVKPPAVQMLFHYWPNLKPPGAISEYRGLQYTAWNPIHCQHIECHNAINKPAVKMCIDPSLSVALGDKPPPLYLCEECSERIAGDHSEWLIDVLLPQAEISAICQKKNCSSHVRRAVVTCFSAGCCGRHGNRPVRYCKRCHSNHHSNEVGAAAETHLYQTSPPPINTRECGAEELVCAVEAVISLLKEAEFHAEQREHELNRRRQLGLSSSHHSLDNADFDNKDDDKHDQRLLSQFGIWFLVSLCTPSENTPTESLARLVAMVFQWFHSTAYMMDDEVGSLVEKLKPQFVTKWLKTVCDVRFDVMVMCLLPKPMEFARVGGYWDKSCSTVTQLKEGLNRILCLIPYNVINQSVWECIMPEWLEAIRTEVPDNQLKEFREVLSKMFDIELCPLPFSMEEMFGFISCRFTGYPSSVQEQALLWLHVLSELDIMVPLQLLISMFSDGVNSVKELANQRKSRVSELAGNLASRRVSVASDPGRRVQHNMLSPFHSPFQSPFRSPLRSPFRSPFKNFGHPGGRTIDFDCEDDEMNLNCFILMFDLLLKQMELQDDGITMGLEHSLSKDIISIINNVFQAPWGGSHTCQKDEKAIECNLCQSSILCYQLACELLERLAPKEESRLVEPTDSLEDSLLSSRPEFIIGPEGEEEENPASKHGENPGNCTEPVEHAAVKNDTERKFCYQQLPVTLRLIYTIFQEMAKFEEPDILFNMLNCLKILCLHGECLYIARKDHPQFLAYIQDHMLIASLWRVVKSEFSQLSSLAVPLLLHALSLPHGADIFWTIINGNFNSKDWKMRFEAVEKVAVICRFLDIHSVTKNHLLKYSLAHAFCCFLTAVEDVNPAVATRAGLLLDTIKRPALQGLCLCLDFQFDTVVKDRPTILSKLLLLHFLKQDIPALSWEFFVNRFETLSLEAQLHLDCNKEFPFPTTITAVRTNVANLSDAALWKIKRARFARNRQKSVRSLRDSVKGPVESKRALSLPETLTSKIRQQSPENDNTIKDLLPEDAGIDHQTVHQLITVLMKFMAKDESSAESDISSAKAFNTVKRHLYVLLGYDQQEGCFMIAPQKMRLSTCFNAFIAGIAQVMDYNINLGKHLLPLVVQVLKYCSCPQLRHYFQQPPRCSLWSLKPHIRQMWLKALLVILYKYPYRDCDISKILLHLIHITVNTLNAQYHSCKPHATAGPLYSDNSNISRYSEKEKGEIELAEYRETGALQDSLLHCVREESIPKKKLRSFKQKSLDIGNADSLLFTLDEHRRKSCIDRCDIEKPPTQAAYIAQRPNDPGRSRQNSATRPDNSEIPENPAMEGFPDARRPVIPEVRLNCMETFEVKVDSPVKPAPKEDLDLIDLSSDSTSGPEKHSILSTSDSDSLVFEPLPPLRIVESDEEEETMNQGDDGPSGKNAASSPSVPSHPSVLSLSTAPLVQVSVEDCSKDFSSKDSGNNQSAGNTDSALITLEDPMDAEGSSKPEELPEFSCGSPLTLKQKRDLLQKSFALPEMSLDDHPDPGTEGEKPGELMPSSGAKTVLLKVPEDAENPTESEKPDTSAESDTEQNPERKVEEDGAEESEFKIQIVPRQRKQRKIAVSAIQREYLDISFNILDKLGEQKDPDPSTKGLSTLEMPRESSSAPTLDAGVPETSSHSSISTQYRQMKRGSLGVLTMSQLMKRQLEHQSSAPHNISNWDTEQIQPGKRQCNVPTCLNPDLEGQPLRMRGATKSSLLSAPSIVSMFVPAPEEFTDEQPTVMTDKCHDCGAILEEYDEETLGLAIVVLSTFIHLSPDLAAPLLLDIMQSVGRLASSTTFSNQAESMMVPGNAAGVAKQFLRCIFHQLAPNGIFPQLFQSTIKDGTFLRTLASSLMDFNELSSIAALSQLLEGLNNKKNLPAGGAMIRCLENIATFMEALPMDSPSSLWTTISNQFQTFFAKLPCVLPLKCSLDSSLRIMICLLKIPSTNATRSLLEPFSKLLSFVIQNAVFTLAYLVELCGLCYRAFTKERDKFYLSRSVVLELLQALKLKSPLPDTNLLLLVQFICADAGTKLAESTILSKQMIASVPGCGTAAMECVRQYINEVLDFMADMHTLTKLKSHMKTCSQPLHEDTFGGHLKVGLAQIAAMDISRGNHRDNKAVIRYLPWLYHPPSAMQQGPKEFIECVSHIRLLSWLLLGSLTHNAVCPNASSPCLPIPLDAGSHVADHLIVILIGFPEQSKTSVLHMCSLFHAFIFAQLWTVYCEQSAVATNLQNQNEFSFTAILTALEFWSRVTPSILQLMAHNKVMVEMVCLHVISLMEALQECNSTIFVKLIPMWLPMIQSNIKHLSAGLQLRLQAIQNHVNHHSLRTLPGSGQSSAGLAALRKWLQCTQFKMAQVEIQSSEAASQFYPL</sequence>
<reference key="1">
    <citation type="journal article" date="2003" name="Nature">
        <title>The DNA sequence and analysis of human chromosome 14.</title>
        <authorList>
            <person name="Heilig R."/>
            <person name="Eckenberg R."/>
            <person name="Petit J.-L."/>
            <person name="Fonknechten N."/>
            <person name="Da Silva C."/>
            <person name="Cattolico L."/>
            <person name="Levy M."/>
            <person name="Barbe V."/>
            <person name="De Berardinis V."/>
            <person name="Ureta-Vidal A."/>
            <person name="Pelletier E."/>
            <person name="Vico V."/>
            <person name="Anthouard V."/>
            <person name="Rowen L."/>
            <person name="Madan A."/>
            <person name="Qin S."/>
            <person name="Sun H."/>
            <person name="Du H."/>
            <person name="Pepin K."/>
            <person name="Artiguenave F."/>
            <person name="Robert C."/>
            <person name="Cruaud C."/>
            <person name="Bruels T."/>
            <person name="Jaillon O."/>
            <person name="Friedlander L."/>
            <person name="Samson G."/>
            <person name="Brottier P."/>
            <person name="Cure S."/>
            <person name="Segurens B."/>
            <person name="Aniere F."/>
            <person name="Samain S."/>
            <person name="Crespeau H."/>
            <person name="Abbasi N."/>
            <person name="Aiach N."/>
            <person name="Boscus D."/>
            <person name="Dickhoff R."/>
            <person name="Dors M."/>
            <person name="Dubois I."/>
            <person name="Friedman C."/>
            <person name="Gouyvenoux M."/>
            <person name="James R."/>
            <person name="Madan A."/>
            <person name="Mairey-Estrada B."/>
            <person name="Mangenot S."/>
            <person name="Martins N."/>
            <person name="Menard M."/>
            <person name="Oztas S."/>
            <person name="Ratcliffe A."/>
            <person name="Shaffer T."/>
            <person name="Trask B."/>
            <person name="Vacherie B."/>
            <person name="Bellemere C."/>
            <person name="Belser C."/>
            <person name="Besnard-Gonnet M."/>
            <person name="Bartol-Mavel D."/>
            <person name="Boutard M."/>
            <person name="Briez-Silla S."/>
            <person name="Combette S."/>
            <person name="Dufosse-Laurent V."/>
            <person name="Ferron C."/>
            <person name="Lechaplais C."/>
            <person name="Louesse C."/>
            <person name="Muselet D."/>
            <person name="Magdelenat G."/>
            <person name="Pateau E."/>
            <person name="Petit E."/>
            <person name="Sirvain-Trukniewicz P."/>
            <person name="Trybou A."/>
            <person name="Vega-Czarny N."/>
            <person name="Bataille E."/>
            <person name="Bluet E."/>
            <person name="Bordelais I."/>
            <person name="Dubois M."/>
            <person name="Dumont C."/>
            <person name="Guerin T."/>
            <person name="Haffray S."/>
            <person name="Hammadi R."/>
            <person name="Muanga J."/>
            <person name="Pellouin V."/>
            <person name="Robert D."/>
            <person name="Wunderle E."/>
            <person name="Gauguet G."/>
            <person name="Roy A."/>
            <person name="Sainte-Marthe L."/>
            <person name="Verdier J."/>
            <person name="Verdier-Discala C."/>
            <person name="Hillier L.W."/>
            <person name="Fulton L."/>
            <person name="McPherson J."/>
            <person name="Matsuda F."/>
            <person name="Wilson R."/>
            <person name="Scarpelli C."/>
            <person name="Gyapay G."/>
            <person name="Wincker P."/>
            <person name="Saurin W."/>
            <person name="Quetier F."/>
            <person name="Waterston R."/>
            <person name="Hood L."/>
            <person name="Weissenbach J."/>
        </authorList>
    </citation>
    <scope>NUCLEOTIDE SEQUENCE [LARGE SCALE GENOMIC DNA]</scope>
</reference>
<reference key="2">
    <citation type="journal article" date="2004" name="Nat. Genet.">
        <title>Complete sequencing and characterization of 21,243 full-length human cDNAs.</title>
        <authorList>
            <person name="Ota T."/>
            <person name="Suzuki Y."/>
            <person name="Nishikawa T."/>
            <person name="Otsuki T."/>
            <person name="Sugiyama T."/>
            <person name="Irie R."/>
            <person name="Wakamatsu A."/>
            <person name="Hayashi K."/>
            <person name="Sato H."/>
            <person name="Nagai K."/>
            <person name="Kimura K."/>
            <person name="Makita H."/>
            <person name="Sekine M."/>
            <person name="Obayashi M."/>
            <person name="Nishi T."/>
            <person name="Shibahara T."/>
            <person name="Tanaka T."/>
            <person name="Ishii S."/>
            <person name="Yamamoto J."/>
            <person name="Saito K."/>
            <person name="Kawai Y."/>
            <person name="Isono Y."/>
            <person name="Nakamura Y."/>
            <person name="Nagahari K."/>
            <person name="Murakami K."/>
            <person name="Yasuda T."/>
            <person name="Iwayanagi T."/>
            <person name="Wagatsuma M."/>
            <person name="Shiratori A."/>
            <person name="Sudo H."/>
            <person name="Hosoiri T."/>
            <person name="Kaku Y."/>
            <person name="Kodaira H."/>
            <person name="Kondo H."/>
            <person name="Sugawara M."/>
            <person name="Takahashi M."/>
            <person name="Kanda K."/>
            <person name="Yokoi T."/>
            <person name="Furuya T."/>
            <person name="Kikkawa E."/>
            <person name="Omura Y."/>
            <person name="Abe K."/>
            <person name="Kamihara K."/>
            <person name="Katsuta N."/>
            <person name="Sato K."/>
            <person name="Tanikawa M."/>
            <person name="Yamazaki M."/>
            <person name="Ninomiya K."/>
            <person name="Ishibashi T."/>
            <person name="Yamashita H."/>
            <person name="Murakawa K."/>
            <person name="Fujimori K."/>
            <person name="Tanai H."/>
            <person name="Kimata M."/>
            <person name="Watanabe M."/>
            <person name="Hiraoka S."/>
            <person name="Chiba Y."/>
            <person name="Ishida S."/>
            <person name="Ono Y."/>
            <person name="Takiguchi S."/>
            <person name="Watanabe S."/>
            <person name="Yosida M."/>
            <person name="Hotuta T."/>
            <person name="Kusano J."/>
            <person name="Kanehori K."/>
            <person name="Takahashi-Fujii A."/>
            <person name="Hara H."/>
            <person name="Tanase T.-O."/>
            <person name="Nomura Y."/>
            <person name="Togiya S."/>
            <person name="Komai F."/>
            <person name="Hara R."/>
            <person name="Takeuchi K."/>
            <person name="Arita M."/>
            <person name="Imose N."/>
            <person name="Musashino K."/>
            <person name="Yuuki H."/>
            <person name="Oshima A."/>
            <person name="Sasaki N."/>
            <person name="Aotsuka S."/>
            <person name="Yoshikawa Y."/>
            <person name="Matsunawa H."/>
            <person name="Ichihara T."/>
            <person name="Shiohata N."/>
            <person name="Sano S."/>
            <person name="Moriya S."/>
            <person name="Momiyama H."/>
            <person name="Satoh N."/>
            <person name="Takami S."/>
            <person name="Terashima Y."/>
            <person name="Suzuki O."/>
            <person name="Nakagawa S."/>
            <person name="Senoh A."/>
            <person name="Mizoguchi H."/>
            <person name="Goto Y."/>
            <person name="Shimizu F."/>
            <person name="Wakebe H."/>
            <person name="Hishigaki H."/>
            <person name="Watanabe T."/>
            <person name="Sugiyama A."/>
            <person name="Takemoto M."/>
            <person name="Kawakami B."/>
            <person name="Yamazaki M."/>
            <person name="Watanabe K."/>
            <person name="Kumagai A."/>
            <person name="Itakura S."/>
            <person name="Fukuzumi Y."/>
            <person name="Fujimori Y."/>
            <person name="Komiyama M."/>
            <person name="Tashiro H."/>
            <person name="Tanigami A."/>
            <person name="Fujiwara T."/>
            <person name="Ono T."/>
            <person name="Yamada K."/>
            <person name="Fujii Y."/>
            <person name="Ozaki K."/>
            <person name="Hirao M."/>
            <person name="Ohmori Y."/>
            <person name="Kawabata A."/>
            <person name="Hikiji T."/>
            <person name="Kobatake N."/>
            <person name="Inagaki H."/>
            <person name="Ikema Y."/>
            <person name="Okamoto S."/>
            <person name="Okitani R."/>
            <person name="Kawakami T."/>
            <person name="Noguchi S."/>
            <person name="Itoh T."/>
            <person name="Shigeta K."/>
            <person name="Senba T."/>
            <person name="Matsumura K."/>
            <person name="Nakajima Y."/>
            <person name="Mizuno T."/>
            <person name="Morinaga M."/>
            <person name="Sasaki M."/>
            <person name="Togashi T."/>
            <person name="Oyama M."/>
            <person name="Hata H."/>
            <person name="Watanabe M."/>
            <person name="Komatsu T."/>
            <person name="Mizushima-Sugano J."/>
            <person name="Satoh T."/>
            <person name="Shirai Y."/>
            <person name="Takahashi Y."/>
            <person name="Nakagawa K."/>
            <person name="Okumura K."/>
            <person name="Nagase T."/>
            <person name="Nomura N."/>
            <person name="Kikuchi H."/>
            <person name="Masuho Y."/>
            <person name="Yamashita R."/>
            <person name="Nakai K."/>
            <person name="Yada T."/>
            <person name="Nakamura Y."/>
            <person name="Ohara O."/>
            <person name="Isogai T."/>
            <person name="Sugano S."/>
        </authorList>
    </citation>
    <scope>NUCLEOTIDE SEQUENCE [LARGE SCALE MRNA] OF 1-1458 (ISOFORM 2)</scope>
    <source>
        <tissue>Teratocarcinoma</tissue>
    </source>
</reference>
<reference key="3">
    <citation type="journal article" date="2000" name="DNA Res.">
        <title>Prediction of the coding sequences of unidentified human genes. XVI. The complete sequences of 150 new cDNA clones from brain which code for large proteins in vitro.</title>
        <authorList>
            <person name="Nagase T."/>
            <person name="Kikuno R."/>
            <person name="Ishikawa K."/>
            <person name="Hirosawa M."/>
            <person name="Ohara O."/>
        </authorList>
    </citation>
    <scope>NUCLEOTIDE SEQUENCE [LARGE SCALE MRNA] OF 197-2635 (ISOFORM 3)</scope>
    <scope>VARIANT ILE-1670</scope>
    <source>
        <tissue>Brain</tissue>
    </source>
</reference>
<reference key="4">
    <citation type="submission" date="2000-01" db="EMBL/GenBank/DDBJ databases">
        <authorList>
            <person name="Ohara O."/>
            <person name="Nagase T."/>
            <person name="Kikuno R."/>
        </authorList>
    </citation>
    <scope>SEQUENCE REVISION</scope>
</reference>
<reference key="5">
    <citation type="journal article" date="2020" name="Sci. Adv.">
        <title>The NALCN channel complex is voltage sensitive and directly modulated by extracellular calcium.</title>
        <authorList>
            <person name="Chua H.C."/>
            <person name="Wulf M."/>
            <person name="Weidling C."/>
            <person name="Rasmussen L.P."/>
            <person name="Pless S.A."/>
        </authorList>
    </citation>
    <scope>SUBCELLULAR LOCATION</scope>
</reference>
<dbReference type="EMBL" id="AL122023">
    <property type="status" value="NOT_ANNOTATED_CDS"/>
    <property type="molecule type" value="Genomic_DNA"/>
</dbReference>
<dbReference type="EMBL" id="AL136338">
    <property type="status" value="NOT_ANNOTATED_CDS"/>
    <property type="molecule type" value="Genomic_DNA"/>
</dbReference>
<dbReference type="EMBL" id="AL157858">
    <property type="status" value="NOT_ANNOTATED_CDS"/>
    <property type="molecule type" value="Genomic_DNA"/>
</dbReference>
<dbReference type="EMBL" id="AK125327">
    <property type="protein sequence ID" value="BAC86131.1"/>
    <property type="molecule type" value="mRNA"/>
</dbReference>
<dbReference type="EMBL" id="AB037830">
    <property type="protein sequence ID" value="BAA92647.2"/>
    <property type="molecule type" value="mRNA"/>
</dbReference>
<dbReference type="CCDS" id="CCDS9911.2">
    <molecule id="Q9P2D8-2"/>
</dbReference>
<dbReference type="RefSeq" id="NP_065869.3">
    <molecule id="Q9P2D8-2"/>
    <property type="nucleotide sequence ID" value="NM_020818.5"/>
</dbReference>
<dbReference type="PDB" id="7SX3">
    <property type="method" value="EM"/>
    <property type="resolution" value="3.10 A"/>
    <property type="chains" value="D=173-2635"/>
</dbReference>
<dbReference type="PDB" id="7SX4">
    <property type="method" value="EM"/>
    <property type="resolution" value="3.50 A"/>
    <property type="chains" value="D=173-2635"/>
</dbReference>
<dbReference type="PDB" id="7WJI">
    <property type="method" value="EM"/>
    <property type="resolution" value="4.50 A"/>
    <property type="chains" value="B=1-2635"/>
</dbReference>
<dbReference type="PDBsum" id="7SX3"/>
<dbReference type="PDBsum" id="7SX4"/>
<dbReference type="PDBsum" id="7WJI"/>
<dbReference type="EMDB" id="EMD-25492"/>
<dbReference type="EMDB" id="EMD-25493"/>
<dbReference type="EMDB" id="EMD-32544"/>
<dbReference type="SMR" id="Q9P2D8"/>
<dbReference type="BioGRID" id="121631">
    <property type="interactions" value="9"/>
</dbReference>
<dbReference type="ComplexPortal" id="CPX-2341">
    <property type="entry name" value="NALCN channelosome complex"/>
</dbReference>
<dbReference type="CORUM" id="Q9P2D8"/>
<dbReference type="FunCoup" id="Q9P2D8">
    <property type="interactions" value="994"/>
</dbReference>
<dbReference type="IntAct" id="Q9P2D8">
    <property type="interactions" value="5"/>
</dbReference>
<dbReference type="STRING" id="9606.ENSP00000256339"/>
<dbReference type="TCDB" id="1.A.1.11.15">
    <property type="family name" value="the voltage-gated ion channel (vic) superfamily"/>
</dbReference>
<dbReference type="GlyGen" id="Q9P2D8">
    <property type="glycosylation" value="3 sites, 1 O-linked glycan (2 sites)"/>
</dbReference>
<dbReference type="iPTMnet" id="Q9P2D8"/>
<dbReference type="PhosphoSitePlus" id="Q9P2D8"/>
<dbReference type="BioMuta" id="UNC79"/>
<dbReference type="DMDM" id="557952608"/>
<dbReference type="jPOST" id="Q9P2D8"/>
<dbReference type="MassIVE" id="Q9P2D8"/>
<dbReference type="PaxDb" id="9606-ENSP00000256339"/>
<dbReference type="PeptideAtlas" id="Q9P2D8"/>
<dbReference type="ProteomicsDB" id="6182"/>
<dbReference type="ProteomicsDB" id="83787">
    <molecule id="Q9P2D8-1"/>
</dbReference>
<dbReference type="ProteomicsDB" id="83788">
    <molecule id="Q9P2D8-2"/>
</dbReference>
<dbReference type="ProteomicsDB" id="83789">
    <molecule id="Q9P2D8-3"/>
</dbReference>
<dbReference type="Antibodypedia" id="77841">
    <property type="antibodies" value="28 antibodies from 7 providers"/>
</dbReference>
<dbReference type="DNASU" id="57578"/>
<dbReference type="Ensembl" id="ENST00000256339.8">
    <molecule id="Q9P2D8-2"/>
    <property type="protein sequence ID" value="ENSP00000256339.4"/>
    <property type="gene ID" value="ENSG00000133958.14"/>
</dbReference>
<dbReference type="Ensembl" id="ENST00000393151.6">
    <molecule id="Q9P2D8-1"/>
    <property type="protein sequence ID" value="ENSP00000376858.2"/>
    <property type="gene ID" value="ENSG00000133958.14"/>
</dbReference>
<dbReference type="Ensembl" id="ENST00000553484.5">
    <molecule id="Q9P2D8-3"/>
    <property type="protein sequence ID" value="ENSP00000451360.1"/>
    <property type="gene ID" value="ENSG00000133958.14"/>
</dbReference>
<dbReference type="Ensembl" id="ENST00000615108.1">
    <molecule id="Q9P2D8-2"/>
    <property type="protein sequence ID" value="ENSP00000479521.1"/>
    <property type="gene ID" value="ENSG00000276416.3"/>
</dbReference>
<dbReference type="Ensembl" id="ENST00000621021.1">
    <molecule id="Q9P2D8-2"/>
    <property type="protein sequence ID" value="ENSP00000480937.1"/>
    <property type="gene ID" value="ENSG00000133958.14"/>
</dbReference>
<dbReference type="Ensembl" id="ENST00000627404.2">
    <molecule id="Q9P2D8-1"/>
    <property type="protein sequence ID" value="ENSP00000487436.1"/>
    <property type="gene ID" value="ENSG00000276416.3"/>
</dbReference>
<dbReference type="Ensembl" id="ENST00000627695.2">
    <molecule id="Q9P2D8-2"/>
    <property type="protein sequence ID" value="ENSP00000485969.1"/>
    <property type="gene ID" value="ENSG00000276416.3"/>
</dbReference>
<dbReference type="Ensembl" id="ENST00000629588.2">
    <molecule id="Q9P2D8-3"/>
    <property type="protein sequence ID" value="ENSP00000486167.1"/>
    <property type="gene ID" value="ENSG00000276416.3"/>
</dbReference>
<dbReference type="GeneID" id="57578"/>
<dbReference type="KEGG" id="hsa:57578"/>
<dbReference type="UCSC" id="uc001ybs.2">
    <molecule id="Q9P2D8-1"/>
    <property type="organism name" value="human"/>
</dbReference>
<dbReference type="AGR" id="HGNC:19966"/>
<dbReference type="CTD" id="57578"/>
<dbReference type="DisGeNET" id="57578"/>
<dbReference type="GeneCards" id="UNC79"/>
<dbReference type="HGNC" id="HGNC:19966">
    <property type="gene designation" value="UNC79"/>
</dbReference>
<dbReference type="HPA" id="ENSG00000133958">
    <property type="expression patterns" value="Group enriched (brain, pituitary gland, retina)"/>
</dbReference>
<dbReference type="MalaCards" id="UNC79"/>
<dbReference type="neXtProt" id="NX_Q9P2D8"/>
<dbReference type="OpenTargets" id="ENSG00000133958"/>
<dbReference type="PharmGKB" id="PA134994003"/>
<dbReference type="VEuPathDB" id="HostDB:ENSG00000133958"/>
<dbReference type="eggNOG" id="KOG3685">
    <property type="taxonomic scope" value="Eukaryota"/>
</dbReference>
<dbReference type="eggNOG" id="KOG4820">
    <property type="taxonomic scope" value="Eukaryota"/>
</dbReference>
<dbReference type="GeneTree" id="ENSGT00390000011802"/>
<dbReference type="InParanoid" id="Q9P2D8"/>
<dbReference type="OMA" id="GKERRWM"/>
<dbReference type="OrthoDB" id="6270916at2759"/>
<dbReference type="PAN-GO" id="Q9P2D8">
    <property type="GO annotations" value="0 GO annotations based on evolutionary models"/>
</dbReference>
<dbReference type="TreeFam" id="TF313437"/>
<dbReference type="PathwayCommons" id="Q9P2D8"/>
<dbReference type="Reactome" id="R-HSA-2672351">
    <property type="pathway name" value="Stimuli-sensing channels"/>
</dbReference>
<dbReference type="SignaLink" id="Q9P2D8"/>
<dbReference type="SIGNOR" id="Q9P2D8"/>
<dbReference type="BioGRID-ORCS" id="57578">
    <property type="hits" value="23 hits in 1151 CRISPR screens"/>
</dbReference>
<dbReference type="ChiTaRS" id="UNC79">
    <property type="organism name" value="human"/>
</dbReference>
<dbReference type="GenomeRNAi" id="57578"/>
<dbReference type="Pharos" id="Q9P2D8">
    <property type="development level" value="Tbio"/>
</dbReference>
<dbReference type="PRO" id="PR:Q9P2D8"/>
<dbReference type="Proteomes" id="UP000005640">
    <property type="component" value="Chromosome 14"/>
</dbReference>
<dbReference type="RNAct" id="Q9P2D8">
    <property type="molecule type" value="protein"/>
</dbReference>
<dbReference type="Bgee" id="ENSG00000133958">
    <property type="expression patterns" value="Expressed in right hemisphere of cerebellum and 80 other cell types or tissues"/>
</dbReference>
<dbReference type="ExpressionAtlas" id="Q9P2D8">
    <property type="expression patterns" value="baseline and differential"/>
</dbReference>
<dbReference type="GO" id="GO:0005886">
    <property type="term" value="C:plasma membrane"/>
    <property type="evidence" value="ECO:0000314"/>
    <property type="project" value="UniProtKB"/>
</dbReference>
<dbReference type="InterPro" id="IPR016024">
    <property type="entry name" value="ARM-type_fold"/>
</dbReference>
<dbReference type="InterPro" id="IPR024855">
    <property type="entry name" value="UNC79"/>
</dbReference>
<dbReference type="PANTHER" id="PTHR21696">
    <property type="entry name" value="PROTEIN UNC-79 HOMOLOG"/>
    <property type="match status" value="1"/>
</dbReference>
<dbReference type="PANTHER" id="PTHR21696:SF2">
    <property type="entry name" value="PROTEIN UNC-79 HOMOLOG"/>
    <property type="match status" value="1"/>
</dbReference>
<dbReference type="Pfam" id="PF14776">
    <property type="entry name" value="UNC-79"/>
    <property type="match status" value="1"/>
</dbReference>
<dbReference type="SUPFAM" id="SSF48371">
    <property type="entry name" value="ARM repeat"/>
    <property type="match status" value="1"/>
</dbReference>
<keyword id="KW-0002">3D-structure</keyword>
<keyword id="KW-0025">Alternative splicing</keyword>
<keyword id="KW-1003">Cell membrane</keyword>
<keyword id="KW-0472">Membrane</keyword>
<keyword id="KW-0597">Phosphoprotein</keyword>
<keyword id="KW-1267">Proteomics identification</keyword>
<keyword id="KW-1185">Reference proteome</keyword>
<keyword id="KW-0812">Transmembrane</keyword>
<keyword id="KW-1133">Transmembrane helix</keyword>